<sequence>MSSLQPTLTNERIGVLDVLRGMAIFGILFVNLAHFSYPDMYLSMLGKENFFMDKWSEADFAAADILKFFIQTKCILLFSFLFGFGMVVMMERAENKGKRFVPLYVRRLMALLLFGTIHAFLIWDGDILTEYALLGFVLLLFRKAKPKTLLIWAVSLYLLFSIPFMLTSFDQSNGQEWVQAVTQQAKQAIHVYGSGSLKDIAEQRIHDRLVYMSSNGMLTYNPLNYFFASIPYFSMFLLGAAAAKSRYLHEPEKHRKGLKRLWMAGLVIGIGAQVLYSVTDKEICLLIGAPFLMFFYVTTVVYLYHKTRVRTVLQSFSAVGRMAFTNYLMQSIVCTWIFYHYGLGLYGKVYPAAGVLITIAVCAVQMVFSHLWLRVFRMGPFEWLWRSATYLSWQPIAKKTKV</sequence>
<reference key="1">
    <citation type="journal article" date="1995" name="DNA Res.">
        <title>Cloning and sequencing of a 36-kb region of the Bacillus subtilis genome between the gnt and iol operons.</title>
        <authorList>
            <person name="Yoshida K."/>
            <person name="Seki S."/>
            <person name="Fujimura M."/>
            <person name="Miwa Y."/>
            <person name="Fujita Y."/>
        </authorList>
    </citation>
    <scope>NUCLEOTIDE SEQUENCE [GENOMIC DNA]</scope>
    <source>
        <strain>168 / BGSC1A1</strain>
    </source>
</reference>
<reference key="2">
    <citation type="journal article" date="1997" name="Nature">
        <title>The complete genome sequence of the Gram-positive bacterium Bacillus subtilis.</title>
        <authorList>
            <person name="Kunst F."/>
            <person name="Ogasawara N."/>
            <person name="Moszer I."/>
            <person name="Albertini A.M."/>
            <person name="Alloni G."/>
            <person name="Azevedo V."/>
            <person name="Bertero M.G."/>
            <person name="Bessieres P."/>
            <person name="Bolotin A."/>
            <person name="Borchert S."/>
            <person name="Borriss R."/>
            <person name="Boursier L."/>
            <person name="Brans A."/>
            <person name="Braun M."/>
            <person name="Brignell S.C."/>
            <person name="Bron S."/>
            <person name="Brouillet S."/>
            <person name="Bruschi C.V."/>
            <person name="Caldwell B."/>
            <person name="Capuano V."/>
            <person name="Carter N.M."/>
            <person name="Choi S.-K."/>
            <person name="Codani J.-J."/>
            <person name="Connerton I.F."/>
            <person name="Cummings N.J."/>
            <person name="Daniel R.A."/>
            <person name="Denizot F."/>
            <person name="Devine K.M."/>
            <person name="Duesterhoeft A."/>
            <person name="Ehrlich S.D."/>
            <person name="Emmerson P.T."/>
            <person name="Entian K.-D."/>
            <person name="Errington J."/>
            <person name="Fabret C."/>
            <person name="Ferrari E."/>
            <person name="Foulger D."/>
            <person name="Fritz C."/>
            <person name="Fujita M."/>
            <person name="Fujita Y."/>
            <person name="Fuma S."/>
            <person name="Galizzi A."/>
            <person name="Galleron N."/>
            <person name="Ghim S.-Y."/>
            <person name="Glaser P."/>
            <person name="Goffeau A."/>
            <person name="Golightly E.J."/>
            <person name="Grandi G."/>
            <person name="Guiseppi G."/>
            <person name="Guy B.J."/>
            <person name="Haga K."/>
            <person name="Haiech J."/>
            <person name="Harwood C.R."/>
            <person name="Henaut A."/>
            <person name="Hilbert H."/>
            <person name="Holsappel S."/>
            <person name="Hosono S."/>
            <person name="Hullo M.-F."/>
            <person name="Itaya M."/>
            <person name="Jones L.-M."/>
            <person name="Joris B."/>
            <person name="Karamata D."/>
            <person name="Kasahara Y."/>
            <person name="Klaerr-Blanchard M."/>
            <person name="Klein C."/>
            <person name="Kobayashi Y."/>
            <person name="Koetter P."/>
            <person name="Koningstein G."/>
            <person name="Krogh S."/>
            <person name="Kumano M."/>
            <person name="Kurita K."/>
            <person name="Lapidus A."/>
            <person name="Lardinois S."/>
            <person name="Lauber J."/>
            <person name="Lazarevic V."/>
            <person name="Lee S.-M."/>
            <person name="Levine A."/>
            <person name="Liu H."/>
            <person name="Masuda S."/>
            <person name="Mauel C."/>
            <person name="Medigue C."/>
            <person name="Medina N."/>
            <person name="Mellado R.P."/>
            <person name="Mizuno M."/>
            <person name="Moestl D."/>
            <person name="Nakai S."/>
            <person name="Noback M."/>
            <person name="Noone D."/>
            <person name="O'Reilly M."/>
            <person name="Ogawa K."/>
            <person name="Ogiwara A."/>
            <person name="Oudega B."/>
            <person name="Park S.-H."/>
            <person name="Parro V."/>
            <person name="Pohl T.M."/>
            <person name="Portetelle D."/>
            <person name="Porwollik S."/>
            <person name="Prescott A.M."/>
            <person name="Presecan E."/>
            <person name="Pujic P."/>
            <person name="Purnelle B."/>
            <person name="Rapoport G."/>
            <person name="Rey M."/>
            <person name="Reynolds S."/>
            <person name="Rieger M."/>
            <person name="Rivolta C."/>
            <person name="Rocha E."/>
            <person name="Roche B."/>
            <person name="Rose M."/>
            <person name="Sadaie Y."/>
            <person name="Sato T."/>
            <person name="Scanlan E."/>
            <person name="Schleich S."/>
            <person name="Schroeter R."/>
            <person name="Scoffone F."/>
            <person name="Sekiguchi J."/>
            <person name="Sekowska A."/>
            <person name="Seror S.J."/>
            <person name="Serror P."/>
            <person name="Shin B.-S."/>
            <person name="Soldo B."/>
            <person name="Sorokin A."/>
            <person name="Tacconi E."/>
            <person name="Takagi T."/>
            <person name="Takahashi H."/>
            <person name="Takemaru K."/>
            <person name="Takeuchi M."/>
            <person name="Tamakoshi A."/>
            <person name="Tanaka T."/>
            <person name="Terpstra P."/>
            <person name="Tognoni A."/>
            <person name="Tosato V."/>
            <person name="Uchiyama S."/>
            <person name="Vandenbol M."/>
            <person name="Vannier F."/>
            <person name="Vassarotti A."/>
            <person name="Viari A."/>
            <person name="Wambutt R."/>
            <person name="Wedler E."/>
            <person name="Wedler H."/>
            <person name="Weitzenegger T."/>
            <person name="Winters P."/>
            <person name="Wipat A."/>
            <person name="Yamamoto H."/>
            <person name="Yamane K."/>
            <person name="Yasumoto K."/>
            <person name="Yata K."/>
            <person name="Yoshida K."/>
            <person name="Yoshikawa H.-F."/>
            <person name="Zumstein E."/>
            <person name="Yoshikawa H."/>
            <person name="Danchin A."/>
        </authorList>
    </citation>
    <scope>NUCLEOTIDE SEQUENCE [LARGE SCALE GENOMIC DNA]</scope>
    <source>
        <strain>168</strain>
    </source>
</reference>
<reference key="3">
    <citation type="journal article" date="2009" name="Microbiology">
        <title>From a consortium sequence to a unified sequence: the Bacillus subtilis 168 reference genome a decade later.</title>
        <authorList>
            <person name="Barbe V."/>
            <person name="Cruveiller S."/>
            <person name="Kunst F."/>
            <person name="Lenoble P."/>
            <person name="Meurice G."/>
            <person name="Sekowska A."/>
            <person name="Vallenet D."/>
            <person name="Wang T."/>
            <person name="Moszer I."/>
            <person name="Medigue C."/>
            <person name="Danchin A."/>
        </authorList>
    </citation>
    <scope>SEQUENCE REVISION TO 219-220 AND 280</scope>
</reference>
<feature type="chain" id="PRO_0000049999" description="Uncharacterized protein YxaH">
    <location>
        <begin position="1"/>
        <end position="402"/>
    </location>
</feature>
<feature type="transmembrane region" description="Helical" evidence="1">
    <location>
        <begin position="13"/>
        <end position="33"/>
    </location>
</feature>
<feature type="transmembrane region" description="Helical" evidence="1">
    <location>
        <begin position="68"/>
        <end position="88"/>
    </location>
</feature>
<feature type="transmembrane region" description="Helical" evidence="1">
    <location>
        <begin position="108"/>
        <end position="128"/>
    </location>
</feature>
<feature type="transmembrane region" description="Helical" evidence="1">
    <location>
        <begin position="149"/>
        <end position="169"/>
    </location>
</feature>
<feature type="transmembrane region" description="Helical" evidence="1">
    <location>
        <begin position="223"/>
        <end position="243"/>
    </location>
</feature>
<feature type="transmembrane region" description="Helical" evidence="1">
    <location>
        <begin position="261"/>
        <end position="281"/>
    </location>
</feature>
<feature type="transmembrane region" description="Helical" evidence="1">
    <location>
        <begin position="283"/>
        <end position="303"/>
    </location>
</feature>
<feature type="transmembrane region" description="Helical" evidence="1">
    <location>
        <begin position="327"/>
        <end position="347"/>
    </location>
</feature>
<feature type="transmembrane region" description="Helical" evidence="1">
    <location>
        <begin position="353"/>
        <end position="373"/>
    </location>
</feature>
<feature type="sequence conflict" description="In Ref. 1; BAA21587." evidence="2" ref="1">
    <original>TY</original>
    <variation>RI</variation>
    <location>
        <begin position="219"/>
        <end position="220"/>
    </location>
</feature>
<feature type="sequence conflict" description="In Ref. 1; BAA21587." evidence="2" ref="1">
    <original>D</original>
    <variation>H</variation>
    <location>
        <position position="280"/>
    </location>
</feature>
<dbReference type="EMBL" id="AB005554">
    <property type="protein sequence ID" value="BAA21587.1"/>
    <property type="molecule type" value="Genomic_DNA"/>
</dbReference>
<dbReference type="EMBL" id="AL009126">
    <property type="protein sequence ID" value="CAB16034.2"/>
    <property type="molecule type" value="Genomic_DNA"/>
</dbReference>
<dbReference type="PIR" id="G70071">
    <property type="entry name" value="G70071"/>
</dbReference>
<dbReference type="RefSeq" id="NP_391877.2">
    <property type="nucleotide sequence ID" value="NC_000964.3"/>
</dbReference>
<dbReference type="RefSeq" id="WP_003244185.1">
    <property type="nucleotide sequence ID" value="NZ_OZ025638.1"/>
</dbReference>
<dbReference type="FunCoup" id="P42107">
    <property type="interactions" value="143"/>
</dbReference>
<dbReference type="STRING" id="224308.BSU39970"/>
<dbReference type="TCDB" id="9.B.169.1.1">
    <property type="family name" value="the integral membrane protein (8 -10 tmss) yeib or duf418 (yeib) family"/>
</dbReference>
<dbReference type="jPOST" id="P42107"/>
<dbReference type="PaxDb" id="224308-BSU39970"/>
<dbReference type="EnsemblBacteria" id="CAB16034">
    <property type="protein sequence ID" value="CAB16034"/>
    <property type="gene ID" value="BSU_39970"/>
</dbReference>
<dbReference type="GeneID" id="937697"/>
<dbReference type="KEGG" id="bsu:BSU39970"/>
<dbReference type="PATRIC" id="fig|224308.179.peg.4323"/>
<dbReference type="eggNOG" id="COG2311">
    <property type="taxonomic scope" value="Bacteria"/>
</dbReference>
<dbReference type="InParanoid" id="P42107"/>
<dbReference type="OrthoDB" id="9807744at2"/>
<dbReference type="PhylomeDB" id="P42107"/>
<dbReference type="BioCyc" id="BSUB:BSU39970-MONOMER"/>
<dbReference type="Proteomes" id="UP000001570">
    <property type="component" value="Chromosome"/>
</dbReference>
<dbReference type="GO" id="GO:0005886">
    <property type="term" value="C:plasma membrane"/>
    <property type="evidence" value="ECO:0000318"/>
    <property type="project" value="GO_Central"/>
</dbReference>
<dbReference type="InterPro" id="IPR052529">
    <property type="entry name" value="Bact_Transport_Assoc"/>
</dbReference>
<dbReference type="InterPro" id="IPR007349">
    <property type="entry name" value="DUF418"/>
</dbReference>
<dbReference type="PANTHER" id="PTHR30590">
    <property type="entry name" value="INNER MEMBRANE PROTEIN"/>
    <property type="match status" value="1"/>
</dbReference>
<dbReference type="PANTHER" id="PTHR30590:SF2">
    <property type="entry name" value="INNER MEMBRANE PROTEIN"/>
    <property type="match status" value="1"/>
</dbReference>
<dbReference type="Pfam" id="PF04235">
    <property type="entry name" value="DUF418"/>
    <property type="match status" value="1"/>
</dbReference>
<accession>P42107</accession>
<comment type="function">
    <text evidence="2">Involved in transport.</text>
</comment>
<comment type="subcellular location">
    <subcellularLocation>
        <location evidence="2">Cell membrane</location>
        <topology evidence="2">Multi-pass membrane protein</topology>
    </subcellularLocation>
</comment>
<evidence type="ECO:0000255" key="1"/>
<evidence type="ECO:0000305" key="2"/>
<name>YXAH_BACSU</name>
<gene>
    <name type="primary">yxaH</name>
    <name type="ordered locus">BSU39970</name>
    <name type="ORF">S14H</name>
</gene>
<protein>
    <recommendedName>
        <fullName>Uncharacterized protein YxaH</fullName>
    </recommendedName>
</protein>
<proteinExistence type="predicted"/>
<organism>
    <name type="scientific">Bacillus subtilis (strain 168)</name>
    <dbReference type="NCBI Taxonomy" id="224308"/>
    <lineage>
        <taxon>Bacteria</taxon>
        <taxon>Bacillati</taxon>
        <taxon>Bacillota</taxon>
        <taxon>Bacilli</taxon>
        <taxon>Bacillales</taxon>
        <taxon>Bacillaceae</taxon>
        <taxon>Bacillus</taxon>
    </lineage>
</organism>
<keyword id="KW-1003">Cell membrane</keyword>
<keyword id="KW-0472">Membrane</keyword>
<keyword id="KW-1185">Reference proteome</keyword>
<keyword id="KW-0812">Transmembrane</keyword>
<keyword id="KW-1133">Transmembrane helix</keyword>
<keyword id="KW-0813">Transport</keyword>